<protein>
    <recommendedName>
        <fullName evidence="1">Dephospho-CoA kinase</fullName>
        <ecNumber evidence="1">2.7.1.24</ecNumber>
    </recommendedName>
    <alternativeName>
        <fullName evidence="1">Dephosphocoenzyme A kinase</fullName>
    </alternativeName>
</protein>
<feature type="chain" id="PRO_0000173006" description="Dephospho-CoA kinase">
    <location>
        <begin position="1"/>
        <end position="206"/>
    </location>
</feature>
<feature type="domain" description="DPCK" evidence="1">
    <location>
        <begin position="4"/>
        <end position="204"/>
    </location>
</feature>
<feature type="binding site" evidence="1">
    <location>
        <begin position="12"/>
        <end position="17"/>
    </location>
    <ligand>
        <name>ATP</name>
        <dbReference type="ChEBI" id="CHEBI:30616"/>
    </ligand>
</feature>
<evidence type="ECO:0000255" key="1">
    <source>
        <dbReference type="HAMAP-Rule" id="MF_00376"/>
    </source>
</evidence>
<sequence>MPKVIGLTGGIASGKSTVSELLSAHGFKIVDADIASRQAVEKGTKGLERVKESFGEQAIDENGEMNRAYVGEVVFNQPEKRLELNEIVHPIVREIMEKEKAQYLSEGYHVIMDIPLLFENNLQDTVDEVWLVYTSESIQIDRLMERNNISMEEAKARVYSQISIDKKRRMADHEIDNRDTKLELKQNLENLLLEEGYIESHSEDVL</sequence>
<proteinExistence type="inferred from homology"/>
<keyword id="KW-0067">ATP-binding</keyword>
<keyword id="KW-0173">Coenzyme A biosynthesis</keyword>
<keyword id="KW-0963">Cytoplasm</keyword>
<keyword id="KW-0418">Kinase</keyword>
<keyword id="KW-0547">Nucleotide-binding</keyword>
<keyword id="KW-1185">Reference proteome</keyword>
<keyword id="KW-0808">Transferase</keyword>
<accession>Q49YB9</accession>
<name>COAE_STAS1</name>
<organism>
    <name type="scientific">Staphylococcus saprophyticus subsp. saprophyticus (strain ATCC 15305 / DSM 20229 / NCIMB 8711 / NCTC 7292 / S-41)</name>
    <dbReference type="NCBI Taxonomy" id="342451"/>
    <lineage>
        <taxon>Bacteria</taxon>
        <taxon>Bacillati</taxon>
        <taxon>Bacillota</taxon>
        <taxon>Bacilli</taxon>
        <taxon>Bacillales</taxon>
        <taxon>Staphylococcaceae</taxon>
        <taxon>Staphylococcus</taxon>
    </lineage>
</organism>
<comment type="function">
    <text evidence="1">Catalyzes the phosphorylation of the 3'-hydroxyl group of dephosphocoenzyme A to form coenzyme A.</text>
</comment>
<comment type="catalytic activity">
    <reaction evidence="1">
        <text>3'-dephospho-CoA + ATP = ADP + CoA + H(+)</text>
        <dbReference type="Rhea" id="RHEA:18245"/>
        <dbReference type="ChEBI" id="CHEBI:15378"/>
        <dbReference type="ChEBI" id="CHEBI:30616"/>
        <dbReference type="ChEBI" id="CHEBI:57287"/>
        <dbReference type="ChEBI" id="CHEBI:57328"/>
        <dbReference type="ChEBI" id="CHEBI:456216"/>
        <dbReference type="EC" id="2.7.1.24"/>
    </reaction>
</comment>
<comment type="pathway">
    <text evidence="1">Cofactor biosynthesis; coenzyme A biosynthesis; CoA from (R)-pantothenate: step 5/5.</text>
</comment>
<comment type="subcellular location">
    <subcellularLocation>
        <location evidence="1">Cytoplasm</location>
    </subcellularLocation>
</comment>
<comment type="similarity">
    <text evidence="1">Belongs to the CoaE family.</text>
</comment>
<gene>
    <name evidence="1" type="primary">coaE</name>
    <name type="ordered locus">SSP1077</name>
</gene>
<dbReference type="EC" id="2.7.1.24" evidence="1"/>
<dbReference type="EMBL" id="AP008934">
    <property type="protein sequence ID" value="BAE18222.1"/>
    <property type="molecule type" value="Genomic_DNA"/>
</dbReference>
<dbReference type="RefSeq" id="WP_011302919.1">
    <property type="nucleotide sequence ID" value="NZ_MTGA01000038.1"/>
</dbReference>
<dbReference type="SMR" id="Q49YB9"/>
<dbReference type="GeneID" id="3615445"/>
<dbReference type="KEGG" id="ssp:SSP1077"/>
<dbReference type="PATRIC" id="fig|342451.11.peg.1076"/>
<dbReference type="eggNOG" id="COG0237">
    <property type="taxonomic scope" value="Bacteria"/>
</dbReference>
<dbReference type="HOGENOM" id="CLU_057180_0_0_9"/>
<dbReference type="OrthoDB" id="9812943at2"/>
<dbReference type="UniPathway" id="UPA00241">
    <property type="reaction ID" value="UER00356"/>
</dbReference>
<dbReference type="Proteomes" id="UP000006371">
    <property type="component" value="Chromosome"/>
</dbReference>
<dbReference type="GO" id="GO:0005737">
    <property type="term" value="C:cytoplasm"/>
    <property type="evidence" value="ECO:0007669"/>
    <property type="project" value="UniProtKB-SubCell"/>
</dbReference>
<dbReference type="GO" id="GO:0005524">
    <property type="term" value="F:ATP binding"/>
    <property type="evidence" value="ECO:0007669"/>
    <property type="project" value="UniProtKB-UniRule"/>
</dbReference>
<dbReference type="GO" id="GO:0004140">
    <property type="term" value="F:dephospho-CoA kinase activity"/>
    <property type="evidence" value="ECO:0007669"/>
    <property type="project" value="UniProtKB-UniRule"/>
</dbReference>
<dbReference type="GO" id="GO:0015937">
    <property type="term" value="P:coenzyme A biosynthetic process"/>
    <property type="evidence" value="ECO:0007669"/>
    <property type="project" value="UniProtKB-UniRule"/>
</dbReference>
<dbReference type="CDD" id="cd02022">
    <property type="entry name" value="DPCK"/>
    <property type="match status" value="1"/>
</dbReference>
<dbReference type="FunFam" id="3.40.50.300:FF:000991">
    <property type="entry name" value="Dephospho-CoA kinase"/>
    <property type="match status" value="1"/>
</dbReference>
<dbReference type="Gene3D" id="3.40.50.300">
    <property type="entry name" value="P-loop containing nucleotide triphosphate hydrolases"/>
    <property type="match status" value="1"/>
</dbReference>
<dbReference type="HAMAP" id="MF_00376">
    <property type="entry name" value="Dephospho_CoA_kinase"/>
    <property type="match status" value="1"/>
</dbReference>
<dbReference type="InterPro" id="IPR001977">
    <property type="entry name" value="Depp_CoAkinase"/>
</dbReference>
<dbReference type="InterPro" id="IPR027417">
    <property type="entry name" value="P-loop_NTPase"/>
</dbReference>
<dbReference type="NCBIfam" id="TIGR00152">
    <property type="entry name" value="dephospho-CoA kinase"/>
    <property type="match status" value="1"/>
</dbReference>
<dbReference type="PANTHER" id="PTHR10695:SF46">
    <property type="entry name" value="BIFUNCTIONAL COENZYME A SYNTHASE-RELATED"/>
    <property type="match status" value="1"/>
</dbReference>
<dbReference type="PANTHER" id="PTHR10695">
    <property type="entry name" value="DEPHOSPHO-COA KINASE-RELATED"/>
    <property type="match status" value="1"/>
</dbReference>
<dbReference type="Pfam" id="PF01121">
    <property type="entry name" value="CoaE"/>
    <property type="match status" value="1"/>
</dbReference>
<dbReference type="SUPFAM" id="SSF52540">
    <property type="entry name" value="P-loop containing nucleoside triphosphate hydrolases"/>
    <property type="match status" value="1"/>
</dbReference>
<dbReference type="PROSITE" id="PS51219">
    <property type="entry name" value="DPCK"/>
    <property type="match status" value="1"/>
</dbReference>
<reference key="1">
    <citation type="journal article" date="2005" name="Proc. Natl. Acad. Sci. U.S.A.">
        <title>Whole genome sequence of Staphylococcus saprophyticus reveals the pathogenesis of uncomplicated urinary tract infection.</title>
        <authorList>
            <person name="Kuroda M."/>
            <person name="Yamashita A."/>
            <person name="Hirakawa H."/>
            <person name="Kumano M."/>
            <person name="Morikawa K."/>
            <person name="Higashide M."/>
            <person name="Maruyama A."/>
            <person name="Inose Y."/>
            <person name="Matoba K."/>
            <person name="Toh H."/>
            <person name="Kuhara S."/>
            <person name="Hattori M."/>
            <person name="Ohta T."/>
        </authorList>
    </citation>
    <scope>NUCLEOTIDE SEQUENCE [LARGE SCALE GENOMIC DNA]</scope>
    <source>
        <strain>ATCC 15305 / DSM 20229 / NCIMB 8711 / NCTC 7292 / S-41</strain>
    </source>
</reference>